<feature type="chain" id="PRO_0000047461" description="Zinc finger protein 219">
    <location>
        <begin position="1"/>
        <end position="722"/>
    </location>
</feature>
<feature type="zinc finger region" description="C2H2-type 1" evidence="3">
    <location>
        <begin position="57"/>
        <end position="79"/>
    </location>
</feature>
<feature type="zinc finger region" description="C2H2-type 2" evidence="3">
    <location>
        <begin position="85"/>
        <end position="107"/>
    </location>
</feature>
<feature type="zinc finger region" description="C2H2-type 3" evidence="3">
    <location>
        <begin position="163"/>
        <end position="186"/>
    </location>
</feature>
<feature type="zinc finger region" description="C2H2-type 4" evidence="3">
    <location>
        <begin position="189"/>
        <end position="212"/>
    </location>
</feature>
<feature type="zinc finger region" description="C2H2-type 5" evidence="3">
    <location>
        <begin position="274"/>
        <end position="296"/>
    </location>
</feature>
<feature type="zinc finger region" description="C2H2-type 6" evidence="3">
    <location>
        <begin position="302"/>
        <end position="324"/>
    </location>
</feature>
<feature type="zinc finger region" description="C2H2-type 7" evidence="3">
    <location>
        <begin position="498"/>
        <end position="520"/>
    </location>
</feature>
<feature type="zinc finger region" description="C2H2-type 8" evidence="3">
    <location>
        <begin position="526"/>
        <end position="548"/>
    </location>
</feature>
<feature type="zinc finger region" description="C2H2-type 9" evidence="2">
    <location>
        <begin position="646"/>
        <end position="668"/>
    </location>
</feature>
<feature type="region of interest" description="Disordered" evidence="4">
    <location>
        <begin position="1"/>
        <end position="21"/>
    </location>
</feature>
<feature type="region of interest" description="Disordered" evidence="4">
    <location>
        <begin position="137"/>
        <end position="160"/>
    </location>
</feature>
<feature type="region of interest" description="Disordered" evidence="4">
    <location>
        <begin position="215"/>
        <end position="275"/>
    </location>
</feature>
<feature type="region of interest" description="Disordered" evidence="4">
    <location>
        <begin position="384"/>
        <end position="495"/>
    </location>
</feature>
<feature type="region of interest" description="Disordered" evidence="4">
    <location>
        <begin position="542"/>
        <end position="648"/>
    </location>
</feature>
<feature type="region of interest" description="Disordered" evidence="4">
    <location>
        <begin position="668"/>
        <end position="722"/>
    </location>
</feature>
<feature type="compositionally biased region" description="Pro residues" evidence="4">
    <location>
        <begin position="225"/>
        <end position="247"/>
    </location>
</feature>
<feature type="compositionally biased region" description="Pro residues" evidence="4">
    <location>
        <begin position="259"/>
        <end position="272"/>
    </location>
</feature>
<feature type="compositionally biased region" description="Gly residues" evidence="4">
    <location>
        <begin position="390"/>
        <end position="404"/>
    </location>
</feature>
<feature type="compositionally biased region" description="Acidic residues" evidence="4">
    <location>
        <begin position="425"/>
        <end position="438"/>
    </location>
</feature>
<feature type="compositionally biased region" description="Low complexity" evidence="4">
    <location>
        <begin position="463"/>
        <end position="477"/>
    </location>
</feature>
<feature type="compositionally biased region" description="Pro residues" evidence="4">
    <location>
        <begin position="558"/>
        <end position="568"/>
    </location>
</feature>
<feature type="compositionally biased region" description="Gly residues" evidence="4">
    <location>
        <begin position="634"/>
        <end position="643"/>
    </location>
</feature>
<feature type="compositionally biased region" description="Basic residues" evidence="4">
    <location>
        <begin position="668"/>
        <end position="677"/>
    </location>
</feature>
<feature type="modified residue" description="Phosphoserine" evidence="11">
    <location>
        <position position="16"/>
    </location>
</feature>
<feature type="modified residue" description="Phosphoserine" evidence="1">
    <location>
        <position position="692"/>
    </location>
</feature>
<feature type="modified residue" description="Phosphothreonine" evidence="1">
    <location>
        <position position="695"/>
    </location>
</feature>
<feature type="modified residue" description="Phosphoserine" evidence="1">
    <location>
        <position position="698"/>
    </location>
</feature>
<feature type="sequence variant" id="VAR_067624" description="In dbSNP:rs17853549." evidence="7 9">
    <original>P</original>
    <variation>T</variation>
    <location>
        <position position="260"/>
    </location>
</feature>
<feature type="sequence conflict" description="In Ref. 4; AAH00694." evidence="10" ref="4">
    <location>
        <begin position="232"/>
        <end position="233"/>
    </location>
</feature>
<feature type="sequence conflict" description="In Ref. 1; BAA90526." evidence="10" ref="1">
    <original>E</original>
    <variation>Q</variation>
    <location>
        <position position="436"/>
    </location>
</feature>
<keyword id="KW-0010">Activator</keyword>
<keyword id="KW-0238">DNA-binding</keyword>
<keyword id="KW-0479">Metal-binding</keyword>
<keyword id="KW-0539">Nucleus</keyword>
<keyword id="KW-0597">Phosphoprotein</keyword>
<keyword id="KW-1267">Proteomics identification</keyword>
<keyword id="KW-1185">Reference proteome</keyword>
<keyword id="KW-0677">Repeat</keyword>
<keyword id="KW-0678">Repressor</keyword>
<keyword id="KW-0804">Transcription</keyword>
<keyword id="KW-0805">Transcription regulation</keyword>
<keyword id="KW-0862">Zinc</keyword>
<keyword id="KW-0863">Zinc-finger</keyword>
<organism>
    <name type="scientific">Homo sapiens</name>
    <name type="common">Human</name>
    <dbReference type="NCBI Taxonomy" id="9606"/>
    <lineage>
        <taxon>Eukaryota</taxon>
        <taxon>Metazoa</taxon>
        <taxon>Chordata</taxon>
        <taxon>Craniata</taxon>
        <taxon>Vertebrata</taxon>
        <taxon>Euteleostomi</taxon>
        <taxon>Mammalia</taxon>
        <taxon>Eutheria</taxon>
        <taxon>Euarchontoglires</taxon>
        <taxon>Primates</taxon>
        <taxon>Haplorrhini</taxon>
        <taxon>Catarrhini</taxon>
        <taxon>Hominidae</taxon>
        <taxon>Homo</taxon>
    </lineage>
</organism>
<protein>
    <recommendedName>
        <fullName>Zinc finger protein 219</fullName>
    </recommendedName>
</protein>
<accession>Q9P2Y4</accession>
<accession>D3DS16</accession>
<accession>Q53Y57</accession>
<accession>Q8IYC1</accession>
<accession>Q9BW28</accession>
<sequence>MEGSRPRAPSGHLAPSPPAFDGELDLQRYSNGPAVSAGSLGMGAVSWSESRAGERRFPCPVCGKRFRFNSILALHLRAHPGAQAFQCPHCGHRAAQRALLRSHLRTHQPERPRSPAARLLLELEERALLREARLGRARSSGGMQATPATEGLARPQAPSSSAFRCPYCKGKFRTSAERERHLHILHRPWKCGLCSFGSSQEEELLHHSLTAHGAPERPLAATSAAPPPQPQPQPPPQPEPRSVPQPEPEPEPEREATPTPAPAAPEEPPAPPEFRCQVCGQSFTQSWFLKGHMRKHKASFDHACPVCGRCFKEPWFLKNHMKVHASKLGPLRAPGPASGPARAPQPPDLGLLAYEPLGPALLLAPAPTPAERREPPSLLGYLSLRAGEGRPNGEGAEPGPGRSFGGFRPLSSALPARARRHRAEEPEEEEEVVEAEEETWARGRSLGSLASLHPRPGEGPGHSASAAGAQARSTATQEENGLLVGGTRPEGGRGATGKDCPFCGKSFRSAHHLKVHLRVHTGERPYKCPHCDYAGTQSGSLKYHLQRHHREQRSGAGPGPPPEPPPPSQRGSAPQSGAKPSPQPATWVEGASSPRPPSSGAGPGSRRKPASPGRTLRNGRGGEAEPLDLSLRAGPGGEAGPGGALHRCLFCPFATGAPELMALHLQVHHSRRARGRRPPQADASPPYARVPSGETPPSPSQEGEEGSGLSRPGEAGLGGQER</sequence>
<reference key="1">
    <citation type="journal article" date="2000" name="DNA Res.">
        <title>Isolation and characterization of a novel zinc finger gene, ZNF219, and mapping to the human chromosome 14q11 region.</title>
        <authorList>
            <person name="Sakai T."/>
            <person name="Toyoda A."/>
            <person name="Hashimoto K."/>
            <person name="Maeda H."/>
        </authorList>
    </citation>
    <scope>NUCLEOTIDE SEQUENCE [MRNA]</scope>
    <scope>SUBCELLULAR LOCATION</scope>
    <scope>TISSUE SPECIFICITY</scope>
    <source>
        <tissue>Testis</tissue>
    </source>
</reference>
<reference key="2">
    <citation type="submission" date="2003-05" db="EMBL/GenBank/DDBJ databases">
        <title>Cloning of human full-length CDSs in BD Creator(TM) system donor vector.</title>
        <authorList>
            <person name="Kalnine N."/>
            <person name="Chen X."/>
            <person name="Rolfs A."/>
            <person name="Halleck A."/>
            <person name="Hines L."/>
            <person name="Eisenstein S."/>
            <person name="Koundinya M."/>
            <person name="Raphael J."/>
            <person name="Moreira D."/>
            <person name="Kelley T."/>
            <person name="LaBaer J."/>
            <person name="Lin Y."/>
            <person name="Phelan M."/>
            <person name="Farmer A."/>
        </authorList>
    </citation>
    <scope>NUCLEOTIDE SEQUENCE [LARGE SCALE MRNA]</scope>
    <scope>VARIANT THR-260</scope>
</reference>
<reference key="3">
    <citation type="submission" date="2005-09" db="EMBL/GenBank/DDBJ databases">
        <authorList>
            <person name="Mural R.J."/>
            <person name="Istrail S."/>
            <person name="Sutton G.G."/>
            <person name="Florea L."/>
            <person name="Halpern A.L."/>
            <person name="Mobarry C.M."/>
            <person name="Lippert R."/>
            <person name="Walenz B."/>
            <person name="Shatkay H."/>
            <person name="Dew I."/>
            <person name="Miller J.R."/>
            <person name="Flanigan M.J."/>
            <person name="Edwards N.J."/>
            <person name="Bolanos R."/>
            <person name="Fasulo D."/>
            <person name="Halldorsson B.V."/>
            <person name="Hannenhalli S."/>
            <person name="Turner R."/>
            <person name="Yooseph S."/>
            <person name="Lu F."/>
            <person name="Nusskern D.R."/>
            <person name="Shue B.C."/>
            <person name="Zheng X.H."/>
            <person name="Zhong F."/>
            <person name="Delcher A.L."/>
            <person name="Huson D.H."/>
            <person name="Kravitz S.A."/>
            <person name="Mouchard L."/>
            <person name="Reinert K."/>
            <person name="Remington K.A."/>
            <person name="Clark A.G."/>
            <person name="Waterman M.S."/>
            <person name="Eichler E.E."/>
            <person name="Adams M.D."/>
            <person name="Hunkapiller M.W."/>
            <person name="Myers E.W."/>
            <person name="Venter J.C."/>
        </authorList>
    </citation>
    <scope>NUCLEOTIDE SEQUENCE [LARGE SCALE GENOMIC DNA]</scope>
</reference>
<reference key="4">
    <citation type="journal article" date="2004" name="Genome Res.">
        <title>The status, quality, and expansion of the NIH full-length cDNA project: the Mammalian Gene Collection (MGC).</title>
        <authorList>
            <consortium name="The MGC Project Team"/>
        </authorList>
    </citation>
    <scope>NUCLEOTIDE SEQUENCE [LARGE SCALE MRNA]</scope>
    <scope>VARIANT THR-260</scope>
    <source>
        <tissue>Brain</tissue>
        <tissue>Kidney</tissue>
    </source>
</reference>
<reference key="5">
    <citation type="journal article" date="2003" name="DNA Res.">
        <title>Identification of the DNA binding specificity of the human ZNF219 protein and its function as a transcriptional repressor.</title>
        <authorList>
            <person name="Sakai T."/>
            <person name="Hino K."/>
            <person name="Wada S."/>
            <person name="Maeda H."/>
        </authorList>
    </citation>
    <scope>FUNCTION</scope>
    <scope>SUBCELLULAR LOCATION</scope>
</reference>
<reference key="6">
    <citation type="journal article" date="2009" name="J. Neurochem.">
        <title>Functional dissection of the alpha-synuclein promoter: transcriptional regulation by ZSCAN21 and ZNF219.</title>
        <authorList>
            <person name="Clough R.L."/>
            <person name="Dermentzaki G."/>
            <person name="Stefanis L."/>
        </authorList>
    </citation>
    <scope>FUNCTION</scope>
</reference>
<reference key="7">
    <citation type="journal article" date="2011" name="Sci. Signal.">
        <title>System-wide temporal characterization of the proteome and phosphoproteome of human embryonic stem cell differentiation.</title>
        <authorList>
            <person name="Rigbolt K.T."/>
            <person name="Prokhorova T.A."/>
            <person name="Akimov V."/>
            <person name="Henningsen J."/>
            <person name="Johansen P.T."/>
            <person name="Kratchmarova I."/>
            <person name="Kassem M."/>
            <person name="Mann M."/>
            <person name="Olsen J.V."/>
            <person name="Blagoev B."/>
        </authorList>
    </citation>
    <scope>IDENTIFICATION BY MASS SPECTROMETRY [LARGE SCALE ANALYSIS]</scope>
</reference>
<reference key="8">
    <citation type="journal article" date="2013" name="J. Proteome Res.">
        <title>Toward a comprehensive characterization of a human cancer cell phosphoproteome.</title>
        <authorList>
            <person name="Zhou H."/>
            <person name="Di Palma S."/>
            <person name="Preisinger C."/>
            <person name="Peng M."/>
            <person name="Polat A.N."/>
            <person name="Heck A.J."/>
            <person name="Mohammed S."/>
        </authorList>
    </citation>
    <scope>PHOSPHORYLATION [LARGE SCALE ANALYSIS] AT SER-16</scope>
    <scope>IDENTIFICATION BY MASS SPECTROMETRY [LARGE SCALE ANALYSIS]</scope>
    <source>
        <tissue>Cervix carcinoma</tissue>
    </source>
</reference>
<proteinExistence type="evidence at protein level"/>
<comment type="function">
    <text evidence="1 6 8">Transcriptional regulator (PubMed:14621294, PubMed:19549071). Recognizes and binds 2 copies of the core DNA sequence motif 5'-GGGGG-3' (PubMed:14621294). Binds to the HMGN1 promoter and may repress HMGN1 expression (PubMed:14621294). Regulates SNCA expression in primary cortical neurons (PubMed:19549071). Binds to the COL2A1 promoter and activates COL2A1 expression, as part of a complex with SOX9 (By similarity). Plays a role in chondrocyte differentiation (By similarity).</text>
</comment>
<comment type="subunit">
    <text evidence="1">Interacts with SOX9 (via C-terminus).</text>
</comment>
<comment type="interaction">
    <interactant intactId="EBI-3937106">
        <id>Q9P2Y4</id>
    </interactant>
    <interactant intactId="EBI-541426">
        <id>Q9BXS5</id>
        <label>AP1M1</label>
    </interactant>
    <organismsDiffer>false</organismsDiffer>
    <experiments>3</experiments>
</comment>
<comment type="interaction">
    <interactant intactId="EBI-3937106">
        <id>Q9P2Y4</id>
    </interactant>
    <interactant intactId="EBI-745689">
        <id>Q7L5A3</id>
        <label>ATOSB</label>
    </interactant>
    <organismsDiffer>false</organismsDiffer>
    <experiments>3</experiments>
</comment>
<comment type="interaction">
    <interactant intactId="EBI-3937106">
        <id>Q9P2Y4</id>
    </interactant>
    <interactant intactId="EBI-750300">
        <id>Q01658</id>
        <label>DR1</label>
    </interactant>
    <organismsDiffer>false</organismsDiffer>
    <experiments>3</experiments>
</comment>
<comment type="interaction">
    <interactant intactId="EBI-3937106">
        <id>Q9P2Y4</id>
    </interactant>
    <interactant intactId="EBI-717919">
        <id>Q4V328</id>
        <label>GRIPAP1</label>
    </interactant>
    <organismsDiffer>false</organismsDiffer>
    <experiments>3</experiments>
</comment>
<comment type="interaction">
    <interactant intactId="EBI-3937106">
        <id>Q9P2Y4</id>
    </interactant>
    <interactant intactId="EBI-8639312">
        <id>P25800</id>
        <label>LMO1</label>
    </interactant>
    <organismsDiffer>false</organismsDiffer>
    <experiments>3</experiments>
</comment>
<comment type="interaction">
    <interactant intactId="EBI-3937106">
        <id>Q9P2Y4</id>
    </interactant>
    <interactant intactId="EBI-725997">
        <id>Q8WV44</id>
        <label>TRIM41</label>
    </interactant>
    <organismsDiffer>false</organismsDiffer>
    <experiments>3</experiments>
</comment>
<comment type="interaction">
    <interactant intactId="EBI-3937106">
        <id>Q9P2Y4</id>
    </interactant>
    <interactant intactId="EBI-8636434">
        <id>Q5I0X7</id>
        <label>TTC32</label>
    </interactant>
    <organismsDiffer>false</organismsDiffer>
    <experiments>3</experiments>
</comment>
<comment type="interaction">
    <interactant intactId="EBI-3937106">
        <id>Q9P2Y4</id>
    </interactant>
    <interactant intactId="EBI-7353612">
        <id>P57075-2</id>
        <label>UBASH3A</label>
    </interactant>
    <organismsDiffer>false</organismsDiffer>
    <experiments>3</experiments>
</comment>
<comment type="subcellular location">
    <subcellularLocation>
        <location evidence="5 6">Nucleus</location>
    </subcellularLocation>
</comment>
<comment type="tissue specificity">
    <text evidence="5">Ubiquitous.</text>
</comment>
<comment type="domain">
    <text evidence="1">C2H2-type zinc-finger domains 5 and 6 are important for the interaction with SOX9.</text>
</comment>
<comment type="similarity">
    <text evidence="10">Belongs to the krueppel C2H2-type zinc-finger protein family.</text>
</comment>
<evidence type="ECO:0000250" key="1">
    <source>
        <dbReference type="UniProtKB" id="Q6IQX8"/>
    </source>
</evidence>
<evidence type="ECO:0000255" key="2"/>
<evidence type="ECO:0000255" key="3">
    <source>
        <dbReference type="PROSITE-ProRule" id="PRU00042"/>
    </source>
</evidence>
<evidence type="ECO:0000256" key="4">
    <source>
        <dbReference type="SAM" id="MobiDB-lite"/>
    </source>
</evidence>
<evidence type="ECO:0000269" key="5">
    <source>
    </source>
</evidence>
<evidence type="ECO:0000269" key="6">
    <source>
    </source>
</evidence>
<evidence type="ECO:0000269" key="7">
    <source>
    </source>
</evidence>
<evidence type="ECO:0000269" key="8">
    <source>
    </source>
</evidence>
<evidence type="ECO:0000269" key="9">
    <source ref="2"/>
</evidence>
<evidence type="ECO:0000305" key="10"/>
<evidence type="ECO:0007744" key="11">
    <source>
    </source>
</evidence>
<gene>
    <name type="primary">ZNF219</name>
</gene>
<dbReference type="EMBL" id="AB015427">
    <property type="protein sequence ID" value="BAA90526.1"/>
    <property type="molecule type" value="mRNA"/>
</dbReference>
<dbReference type="EMBL" id="BT006956">
    <property type="protein sequence ID" value="AAP35602.1"/>
    <property type="molecule type" value="mRNA"/>
</dbReference>
<dbReference type="EMBL" id="CH471078">
    <property type="protein sequence ID" value="EAW66404.1"/>
    <property type="molecule type" value="Genomic_DNA"/>
</dbReference>
<dbReference type="EMBL" id="CH471078">
    <property type="protein sequence ID" value="EAW66405.1"/>
    <property type="molecule type" value="Genomic_DNA"/>
</dbReference>
<dbReference type="EMBL" id="CH471078">
    <property type="protein sequence ID" value="EAW66406.1"/>
    <property type="molecule type" value="Genomic_DNA"/>
</dbReference>
<dbReference type="EMBL" id="CH471078">
    <property type="protein sequence ID" value="EAW66407.1"/>
    <property type="molecule type" value="Genomic_DNA"/>
</dbReference>
<dbReference type="EMBL" id="BC000694">
    <property type="protein sequence ID" value="AAH00694.1"/>
    <property type="molecule type" value="mRNA"/>
</dbReference>
<dbReference type="EMBL" id="BC036105">
    <property type="protein sequence ID" value="AAH36105.1"/>
    <property type="molecule type" value="mRNA"/>
</dbReference>
<dbReference type="CCDS" id="CCDS9568.1"/>
<dbReference type="RefSeq" id="NP_001095142.1">
    <property type="nucleotide sequence ID" value="NM_001101672.2"/>
</dbReference>
<dbReference type="RefSeq" id="NP_001095924.1">
    <property type="nucleotide sequence ID" value="NM_001102454.2"/>
</dbReference>
<dbReference type="RefSeq" id="NP_057507.2">
    <property type="nucleotide sequence ID" value="NM_016423.3"/>
</dbReference>
<dbReference type="RefSeq" id="XP_006720226.1">
    <property type="nucleotide sequence ID" value="XM_006720163.2"/>
</dbReference>
<dbReference type="RefSeq" id="XP_006720227.1">
    <property type="nucleotide sequence ID" value="XM_006720164.3"/>
</dbReference>
<dbReference type="RefSeq" id="XP_016876843.1">
    <property type="nucleotide sequence ID" value="XM_017021354.1"/>
</dbReference>
<dbReference type="RefSeq" id="XP_016876844.1">
    <property type="nucleotide sequence ID" value="XM_017021355.1"/>
</dbReference>
<dbReference type="BioGRID" id="119387">
    <property type="interactions" value="81"/>
</dbReference>
<dbReference type="FunCoup" id="Q9P2Y4">
    <property type="interactions" value="1196"/>
</dbReference>
<dbReference type="IntAct" id="Q9P2Y4">
    <property type="interactions" value="55"/>
</dbReference>
<dbReference type="MINT" id="Q9P2Y4"/>
<dbReference type="STRING" id="9606.ENSP00000354206"/>
<dbReference type="GlyGen" id="Q9P2Y4">
    <property type="glycosylation" value="7 sites, 1 O-linked glycan (4 sites)"/>
</dbReference>
<dbReference type="iPTMnet" id="Q9P2Y4"/>
<dbReference type="PhosphoSitePlus" id="Q9P2Y4"/>
<dbReference type="BioMuta" id="ZNF219"/>
<dbReference type="DMDM" id="55977885"/>
<dbReference type="jPOST" id="Q9P2Y4"/>
<dbReference type="MassIVE" id="Q9P2Y4"/>
<dbReference type="PaxDb" id="9606-ENSP00000354206"/>
<dbReference type="PeptideAtlas" id="Q9P2Y4"/>
<dbReference type="ProteomicsDB" id="83913"/>
<dbReference type="Pumba" id="Q9P2Y4"/>
<dbReference type="Antibodypedia" id="22098">
    <property type="antibodies" value="126 antibodies from 24 providers"/>
</dbReference>
<dbReference type="DNASU" id="51222"/>
<dbReference type="Ensembl" id="ENST00000360947.8">
    <property type="protein sequence ID" value="ENSP00000354206.3"/>
    <property type="gene ID" value="ENSG00000165804.16"/>
</dbReference>
<dbReference type="Ensembl" id="ENST00000421093.6">
    <property type="protein sequence ID" value="ENSP00000392401.2"/>
    <property type="gene ID" value="ENSG00000165804.16"/>
</dbReference>
<dbReference type="Ensembl" id="ENST00000451119.6">
    <property type="protein sequence ID" value="ENSP00000388558.2"/>
    <property type="gene ID" value="ENSG00000165804.16"/>
</dbReference>
<dbReference type="GeneID" id="51222"/>
<dbReference type="KEGG" id="hsa:51222"/>
<dbReference type="MANE-Select" id="ENST00000360947.8">
    <property type="protein sequence ID" value="ENSP00000354206.3"/>
    <property type="RefSeq nucleotide sequence ID" value="NM_016423.3"/>
    <property type="RefSeq protein sequence ID" value="NP_057507.2"/>
</dbReference>
<dbReference type="UCSC" id="uc001vzr.3">
    <property type="organism name" value="human"/>
</dbReference>
<dbReference type="AGR" id="HGNC:13011"/>
<dbReference type="CTD" id="51222"/>
<dbReference type="DisGeNET" id="51222"/>
<dbReference type="GeneCards" id="ZNF219"/>
<dbReference type="HGNC" id="HGNC:13011">
    <property type="gene designation" value="ZNF219"/>
</dbReference>
<dbReference type="HPA" id="ENSG00000165804">
    <property type="expression patterns" value="Low tissue specificity"/>
</dbReference>
<dbReference type="MIM" id="605036">
    <property type="type" value="gene"/>
</dbReference>
<dbReference type="neXtProt" id="NX_Q9P2Y4"/>
<dbReference type="OpenTargets" id="ENSG00000165804"/>
<dbReference type="PharmGKB" id="PA37590"/>
<dbReference type="VEuPathDB" id="HostDB:ENSG00000165804"/>
<dbReference type="eggNOG" id="KOG1721">
    <property type="taxonomic scope" value="Eukaryota"/>
</dbReference>
<dbReference type="GeneTree" id="ENSGT00940000161408"/>
<dbReference type="HOGENOM" id="CLU_008125_1_0_1"/>
<dbReference type="InParanoid" id="Q9P2Y4"/>
<dbReference type="OMA" id="EESWTRG"/>
<dbReference type="OrthoDB" id="8943932at2759"/>
<dbReference type="PAN-GO" id="Q9P2Y4">
    <property type="GO annotations" value="4 GO annotations based on evolutionary models"/>
</dbReference>
<dbReference type="PhylomeDB" id="Q9P2Y4"/>
<dbReference type="TreeFam" id="TF332241"/>
<dbReference type="PathwayCommons" id="Q9P2Y4"/>
<dbReference type="SignaLink" id="Q9P2Y4"/>
<dbReference type="BioGRID-ORCS" id="51222">
    <property type="hits" value="27 hits in 1174 CRISPR screens"/>
</dbReference>
<dbReference type="ChiTaRS" id="ZNF219">
    <property type="organism name" value="human"/>
</dbReference>
<dbReference type="GeneWiki" id="ZNF219"/>
<dbReference type="GenomeRNAi" id="51222"/>
<dbReference type="Pharos" id="Q9P2Y4">
    <property type="development level" value="Tbio"/>
</dbReference>
<dbReference type="PRO" id="PR:Q9P2Y4"/>
<dbReference type="Proteomes" id="UP000005640">
    <property type="component" value="Chromosome 14"/>
</dbReference>
<dbReference type="RNAct" id="Q9P2Y4">
    <property type="molecule type" value="protein"/>
</dbReference>
<dbReference type="Bgee" id="ENSG00000165804">
    <property type="expression patterns" value="Expressed in right adrenal gland and 145 other cell types or tissues"/>
</dbReference>
<dbReference type="ExpressionAtlas" id="Q9P2Y4">
    <property type="expression patterns" value="baseline and differential"/>
</dbReference>
<dbReference type="GO" id="GO:0016020">
    <property type="term" value="C:membrane"/>
    <property type="evidence" value="ECO:0007669"/>
    <property type="project" value="InterPro"/>
</dbReference>
<dbReference type="GO" id="GO:0005654">
    <property type="term" value="C:nucleoplasm"/>
    <property type="evidence" value="ECO:0000314"/>
    <property type="project" value="HPA"/>
</dbReference>
<dbReference type="GO" id="GO:0005634">
    <property type="term" value="C:nucleus"/>
    <property type="evidence" value="ECO:0000314"/>
    <property type="project" value="UniProtKB"/>
</dbReference>
<dbReference type="GO" id="GO:0003677">
    <property type="term" value="F:DNA binding"/>
    <property type="evidence" value="ECO:0000314"/>
    <property type="project" value="UniProtKB"/>
</dbReference>
<dbReference type="GO" id="GO:0003700">
    <property type="term" value="F:DNA-binding transcription factor activity"/>
    <property type="evidence" value="ECO:0000314"/>
    <property type="project" value="UniProtKB"/>
</dbReference>
<dbReference type="GO" id="GO:0000981">
    <property type="term" value="F:DNA-binding transcription factor activity, RNA polymerase II-specific"/>
    <property type="evidence" value="ECO:0000318"/>
    <property type="project" value="GO_Central"/>
</dbReference>
<dbReference type="GO" id="GO:0001227">
    <property type="term" value="F:DNA-binding transcription repressor activity, RNA polymerase II-specific"/>
    <property type="evidence" value="ECO:0000314"/>
    <property type="project" value="NTNU_SB"/>
</dbReference>
<dbReference type="GO" id="GO:0004969">
    <property type="term" value="F:histamine receptor activity"/>
    <property type="evidence" value="ECO:0007669"/>
    <property type="project" value="InterPro"/>
</dbReference>
<dbReference type="GO" id="GO:0000978">
    <property type="term" value="F:RNA polymerase II cis-regulatory region sequence-specific DNA binding"/>
    <property type="evidence" value="ECO:0000314"/>
    <property type="project" value="NTNU_SB"/>
</dbReference>
<dbReference type="GO" id="GO:0008270">
    <property type="term" value="F:zinc ion binding"/>
    <property type="evidence" value="ECO:0007669"/>
    <property type="project" value="UniProtKB-KW"/>
</dbReference>
<dbReference type="GO" id="GO:0060174">
    <property type="term" value="P:limb bud formation"/>
    <property type="evidence" value="ECO:0007669"/>
    <property type="project" value="Ensembl"/>
</dbReference>
<dbReference type="GO" id="GO:0045892">
    <property type="term" value="P:negative regulation of DNA-templated transcription"/>
    <property type="evidence" value="ECO:0000314"/>
    <property type="project" value="UniProtKB"/>
</dbReference>
<dbReference type="GO" id="GO:0000122">
    <property type="term" value="P:negative regulation of transcription by RNA polymerase II"/>
    <property type="evidence" value="ECO:0000314"/>
    <property type="project" value="NTNU_SB"/>
</dbReference>
<dbReference type="GO" id="GO:0032332">
    <property type="term" value="P:positive regulation of chondrocyte differentiation"/>
    <property type="evidence" value="ECO:0007669"/>
    <property type="project" value="Ensembl"/>
</dbReference>
<dbReference type="GO" id="GO:0045944">
    <property type="term" value="P:positive regulation of transcription by RNA polymerase II"/>
    <property type="evidence" value="ECO:0007669"/>
    <property type="project" value="Ensembl"/>
</dbReference>
<dbReference type="GO" id="GO:0006355">
    <property type="term" value="P:regulation of DNA-templated transcription"/>
    <property type="evidence" value="ECO:0000315"/>
    <property type="project" value="UniProtKB"/>
</dbReference>
<dbReference type="FunFam" id="3.30.160.60:FF:000075">
    <property type="entry name" value="Putative zinc finger protein 536"/>
    <property type="match status" value="1"/>
</dbReference>
<dbReference type="FunFam" id="3.30.160.60:FF:001038">
    <property type="entry name" value="Zinc finger protein 217"/>
    <property type="match status" value="1"/>
</dbReference>
<dbReference type="FunFam" id="3.30.160.60:FF:001140">
    <property type="entry name" value="Zinc finger protein 219"/>
    <property type="match status" value="1"/>
</dbReference>
<dbReference type="FunFam" id="3.30.160.60:FF:000591">
    <property type="entry name" value="Zinc finger protein 536"/>
    <property type="match status" value="1"/>
</dbReference>
<dbReference type="FunFam" id="3.30.160.60:FF:000615">
    <property type="entry name" value="Zinc finger protein 536"/>
    <property type="match status" value="1"/>
</dbReference>
<dbReference type="Gene3D" id="3.30.160.60">
    <property type="entry name" value="Classic Zinc Finger"/>
    <property type="match status" value="7"/>
</dbReference>
<dbReference type="InterPro" id="IPR003980">
    <property type="entry name" value="Histamine_H3_rcpt"/>
</dbReference>
<dbReference type="InterPro" id="IPR051967">
    <property type="entry name" value="Krueppel_C2H2-ZF"/>
</dbReference>
<dbReference type="InterPro" id="IPR036236">
    <property type="entry name" value="Znf_C2H2_sf"/>
</dbReference>
<dbReference type="InterPro" id="IPR013087">
    <property type="entry name" value="Znf_C2H2_type"/>
</dbReference>
<dbReference type="PANTHER" id="PTHR45925">
    <property type="entry name" value="ZINC FINGER PROTEIN"/>
    <property type="match status" value="1"/>
</dbReference>
<dbReference type="PANTHER" id="PTHR45925:SF1">
    <property type="entry name" value="ZINC FINGER PROTEIN 219"/>
    <property type="match status" value="1"/>
</dbReference>
<dbReference type="Pfam" id="PF00096">
    <property type="entry name" value="zf-C2H2"/>
    <property type="match status" value="6"/>
</dbReference>
<dbReference type="PRINTS" id="PR01471">
    <property type="entry name" value="HISTAMINEH3R"/>
</dbReference>
<dbReference type="SMART" id="SM00355">
    <property type="entry name" value="ZnF_C2H2"/>
    <property type="match status" value="9"/>
</dbReference>
<dbReference type="SUPFAM" id="SSF57667">
    <property type="entry name" value="beta-beta-alpha zinc fingers"/>
    <property type="match status" value="3"/>
</dbReference>
<dbReference type="PROSITE" id="PS00028">
    <property type="entry name" value="ZINC_FINGER_C2H2_1"/>
    <property type="match status" value="5"/>
</dbReference>
<dbReference type="PROSITE" id="PS50157">
    <property type="entry name" value="ZINC_FINGER_C2H2_2"/>
    <property type="match status" value="6"/>
</dbReference>
<name>ZN219_HUMAN</name>